<reference key="1">
    <citation type="journal article" date="2006" name="BMC Genomics">
        <title>Complete genome sequence of Shigella flexneri 5b and comparison with Shigella flexneri 2a.</title>
        <authorList>
            <person name="Nie H."/>
            <person name="Yang F."/>
            <person name="Zhang X."/>
            <person name="Yang J."/>
            <person name="Chen L."/>
            <person name="Wang J."/>
            <person name="Xiong Z."/>
            <person name="Peng J."/>
            <person name="Sun L."/>
            <person name="Dong J."/>
            <person name="Xue Y."/>
            <person name="Xu X."/>
            <person name="Chen S."/>
            <person name="Yao Z."/>
            <person name="Shen Y."/>
            <person name="Jin Q."/>
        </authorList>
    </citation>
    <scope>NUCLEOTIDE SEQUENCE [LARGE SCALE GENOMIC DNA]</scope>
    <source>
        <strain>8401</strain>
    </source>
</reference>
<gene>
    <name evidence="1" type="primary">secA</name>
    <name type="ordered locus">SFV_0091</name>
</gene>
<feature type="chain" id="PRO_0000321004" description="Protein translocase subunit SecA">
    <location>
        <begin position="1"/>
        <end position="901"/>
    </location>
</feature>
<feature type="region of interest" description="Disordered" evidence="2">
    <location>
        <begin position="859"/>
        <end position="901"/>
    </location>
</feature>
<feature type="compositionally biased region" description="Basic residues" evidence="2">
    <location>
        <begin position="891"/>
        <end position="901"/>
    </location>
</feature>
<feature type="binding site" evidence="1">
    <location>
        <position position="87"/>
    </location>
    <ligand>
        <name>ATP</name>
        <dbReference type="ChEBI" id="CHEBI:30616"/>
    </ligand>
</feature>
<feature type="binding site" evidence="1">
    <location>
        <begin position="105"/>
        <end position="109"/>
    </location>
    <ligand>
        <name>ATP</name>
        <dbReference type="ChEBI" id="CHEBI:30616"/>
    </ligand>
</feature>
<feature type="binding site" evidence="1">
    <location>
        <position position="512"/>
    </location>
    <ligand>
        <name>ATP</name>
        <dbReference type="ChEBI" id="CHEBI:30616"/>
    </ligand>
</feature>
<feature type="binding site" evidence="1">
    <location>
        <position position="885"/>
    </location>
    <ligand>
        <name>Zn(2+)</name>
        <dbReference type="ChEBI" id="CHEBI:29105"/>
    </ligand>
</feature>
<feature type="binding site" evidence="1">
    <location>
        <position position="887"/>
    </location>
    <ligand>
        <name>Zn(2+)</name>
        <dbReference type="ChEBI" id="CHEBI:29105"/>
    </ligand>
</feature>
<feature type="binding site" evidence="1">
    <location>
        <position position="896"/>
    </location>
    <ligand>
        <name>Zn(2+)</name>
        <dbReference type="ChEBI" id="CHEBI:29105"/>
    </ligand>
</feature>
<feature type="binding site" evidence="1">
    <location>
        <position position="897"/>
    </location>
    <ligand>
        <name>Zn(2+)</name>
        <dbReference type="ChEBI" id="CHEBI:29105"/>
    </ligand>
</feature>
<evidence type="ECO:0000255" key="1">
    <source>
        <dbReference type="HAMAP-Rule" id="MF_01382"/>
    </source>
</evidence>
<evidence type="ECO:0000256" key="2">
    <source>
        <dbReference type="SAM" id="MobiDB-lite"/>
    </source>
</evidence>
<protein>
    <recommendedName>
        <fullName evidence="1">Protein translocase subunit SecA</fullName>
        <ecNumber evidence="1">7.4.2.8</ecNumber>
    </recommendedName>
</protein>
<sequence length="901" mass="102023">MLIKLLTKVFGSRNDRTLRRMRKVVNIINAMEPEMEKLSDEELKGKTAEFRARLEKGEVLENLIPEAFAVVREASKRVFGMRHFDVQLLGGMVLNERCIAEMRTGEGKTLTATLPAYLNALTGKGVHVVTVNDYLAQRDAENNRPLFEFLGLTVGINLPGMPAPAKREAYAADITYGTNNEYGFDYLRDNMAFSPEERVQRKLHYALVDEVDSILIDEARTPLIISGPAEDSSEMYKRVNKIIPHLIRQEKEDSETFQGEGHFSVDEKSRQVNLTERGLVLIEELLVKEGIMDEGESLYSPANIMLMHHVTAALRAHALFTRDVDYIVKDGEVIIVDEHTGRTMQGRRWSDGLHQAVEAKEGVQIQNENQTLASITFQNYFRLYEKLAGMTGTADTEAFEFSSIYKLDTVVVPTNRPMIRKDLPDLVYMTEAEKIQAIIEDIKERTAKGQPVLVGTISIEKSELVSNELTKAGIKHNVLNAKFHANEAAIVAQAGYPAAVTIATNMAGRGTDIVLGGSWQAEVAALENPTAEQIEKIKADWQVRHDAVLEAGGLHIIGTERHESRRIDNQLRGRSGRQGDAGSSRFYLSMEDALMRIFASDRVSGMMRKLGMKPGEAIEHPWVTKAIANAQRKVESRNFDIRKQLLEYDDVANDQRRAIYSQRNELLDVSDVSETINSIREDVFKATIDAYIPPQSLEEMWDIPGLQERLKNDFDLDLPIAEWLDKEPELHEETLRERILAQSIEVYQRKEEVVGAEMMRHFEKGVMLQTLDSLWKEHLAAMDYLRQGIHLRGYAQKDPKQEYKRESFSMFAAMLESLKYEVISTLSKVQVRMPEEVEELEQQRRMEAERLAQMQQLSHQDDDSAAAAALAAQTGERKVGRNDPCPCGSGKKYKQCHGRLQ</sequence>
<keyword id="KW-0067">ATP-binding</keyword>
<keyword id="KW-0997">Cell inner membrane</keyword>
<keyword id="KW-1003">Cell membrane</keyword>
<keyword id="KW-0963">Cytoplasm</keyword>
<keyword id="KW-0472">Membrane</keyword>
<keyword id="KW-0479">Metal-binding</keyword>
<keyword id="KW-0547">Nucleotide-binding</keyword>
<keyword id="KW-0653">Protein transport</keyword>
<keyword id="KW-1278">Translocase</keyword>
<keyword id="KW-0811">Translocation</keyword>
<keyword id="KW-0813">Transport</keyword>
<keyword id="KW-0862">Zinc</keyword>
<name>SECA_SHIF8</name>
<proteinExistence type="inferred from homology"/>
<accession>Q0T899</accession>
<comment type="function">
    <text evidence="1">Part of the Sec protein translocase complex. Interacts with the SecYEG preprotein conducting channel. Has a central role in coupling the hydrolysis of ATP to the transfer of proteins into and across the cell membrane, serving both as a receptor for the preprotein-SecB complex and as an ATP-driven molecular motor driving the stepwise translocation of polypeptide chains across the membrane.</text>
</comment>
<comment type="catalytic activity">
    <reaction evidence="1">
        <text>ATP + H2O + cellular proteinSide 1 = ADP + phosphate + cellular proteinSide 2.</text>
        <dbReference type="EC" id="7.4.2.8"/>
    </reaction>
</comment>
<comment type="cofactor">
    <cofactor evidence="1">
        <name>Zn(2+)</name>
        <dbReference type="ChEBI" id="CHEBI:29105"/>
    </cofactor>
    <text evidence="1">May bind 1 zinc ion per subunit.</text>
</comment>
<comment type="subunit">
    <text evidence="1">Monomer and homodimer. Part of the essential Sec protein translocation apparatus which comprises SecA, SecYEG and auxiliary proteins SecDF-YajC and YidC.</text>
</comment>
<comment type="subcellular location">
    <subcellularLocation>
        <location evidence="1">Cell inner membrane</location>
        <topology evidence="1">Peripheral membrane protein</topology>
        <orientation evidence="1">Cytoplasmic side</orientation>
    </subcellularLocation>
    <subcellularLocation>
        <location evidence="1">Cytoplasm</location>
    </subcellularLocation>
    <text evidence="1">Distribution is 50-50.</text>
</comment>
<comment type="induction">
    <text evidence="1">Repressed under conditions of excess protein secretion capacity and derepressed when protein secretion becomes limiting. This is regulated by SecM.</text>
</comment>
<comment type="similarity">
    <text evidence="1">Belongs to the SecA family.</text>
</comment>
<organism>
    <name type="scientific">Shigella flexneri serotype 5b (strain 8401)</name>
    <dbReference type="NCBI Taxonomy" id="373384"/>
    <lineage>
        <taxon>Bacteria</taxon>
        <taxon>Pseudomonadati</taxon>
        <taxon>Pseudomonadota</taxon>
        <taxon>Gammaproteobacteria</taxon>
        <taxon>Enterobacterales</taxon>
        <taxon>Enterobacteriaceae</taxon>
        <taxon>Shigella</taxon>
    </lineage>
</organism>
<dbReference type="EC" id="7.4.2.8" evidence="1"/>
<dbReference type="EMBL" id="CP000266">
    <property type="protein sequence ID" value="ABF02377.1"/>
    <property type="molecule type" value="Genomic_DNA"/>
</dbReference>
<dbReference type="RefSeq" id="WP_000905789.1">
    <property type="nucleotide sequence ID" value="NC_008258.1"/>
</dbReference>
<dbReference type="SMR" id="Q0T899"/>
<dbReference type="GeneID" id="93777336"/>
<dbReference type="KEGG" id="sfv:SFV_0091"/>
<dbReference type="HOGENOM" id="CLU_005314_3_0_6"/>
<dbReference type="Proteomes" id="UP000000659">
    <property type="component" value="Chromosome"/>
</dbReference>
<dbReference type="GO" id="GO:0031522">
    <property type="term" value="C:cell envelope Sec protein transport complex"/>
    <property type="evidence" value="ECO:0007669"/>
    <property type="project" value="TreeGrafter"/>
</dbReference>
<dbReference type="GO" id="GO:0005829">
    <property type="term" value="C:cytosol"/>
    <property type="evidence" value="ECO:0007669"/>
    <property type="project" value="TreeGrafter"/>
</dbReference>
<dbReference type="GO" id="GO:0005886">
    <property type="term" value="C:plasma membrane"/>
    <property type="evidence" value="ECO:0007669"/>
    <property type="project" value="UniProtKB-SubCell"/>
</dbReference>
<dbReference type="GO" id="GO:0005524">
    <property type="term" value="F:ATP binding"/>
    <property type="evidence" value="ECO:0007669"/>
    <property type="project" value="UniProtKB-UniRule"/>
</dbReference>
<dbReference type="GO" id="GO:0046872">
    <property type="term" value="F:metal ion binding"/>
    <property type="evidence" value="ECO:0007669"/>
    <property type="project" value="UniProtKB-KW"/>
</dbReference>
<dbReference type="GO" id="GO:0008564">
    <property type="term" value="F:protein-exporting ATPase activity"/>
    <property type="evidence" value="ECO:0007669"/>
    <property type="project" value="UniProtKB-EC"/>
</dbReference>
<dbReference type="GO" id="GO:0065002">
    <property type="term" value="P:intracellular protein transmembrane transport"/>
    <property type="evidence" value="ECO:0007669"/>
    <property type="project" value="UniProtKB-UniRule"/>
</dbReference>
<dbReference type="GO" id="GO:0017038">
    <property type="term" value="P:protein import"/>
    <property type="evidence" value="ECO:0007669"/>
    <property type="project" value="InterPro"/>
</dbReference>
<dbReference type="GO" id="GO:0006605">
    <property type="term" value="P:protein targeting"/>
    <property type="evidence" value="ECO:0007669"/>
    <property type="project" value="UniProtKB-UniRule"/>
</dbReference>
<dbReference type="GO" id="GO:0043952">
    <property type="term" value="P:protein transport by the Sec complex"/>
    <property type="evidence" value="ECO:0007669"/>
    <property type="project" value="TreeGrafter"/>
</dbReference>
<dbReference type="CDD" id="cd17928">
    <property type="entry name" value="DEXDc_SecA"/>
    <property type="match status" value="1"/>
</dbReference>
<dbReference type="CDD" id="cd18803">
    <property type="entry name" value="SF2_C_secA"/>
    <property type="match status" value="1"/>
</dbReference>
<dbReference type="FunFam" id="1.10.3060.10:FF:000001">
    <property type="entry name" value="Preprotein translocase subunit SecA"/>
    <property type="match status" value="1"/>
</dbReference>
<dbReference type="FunFam" id="3.40.50.300:FF:000081">
    <property type="entry name" value="Preprotein translocase subunit SecA"/>
    <property type="match status" value="1"/>
</dbReference>
<dbReference type="FunFam" id="3.40.50.300:FF:000113">
    <property type="entry name" value="Preprotein translocase subunit SecA"/>
    <property type="match status" value="1"/>
</dbReference>
<dbReference type="FunFam" id="3.90.1440.10:FF:000001">
    <property type="entry name" value="Preprotein translocase subunit SecA"/>
    <property type="match status" value="1"/>
</dbReference>
<dbReference type="Gene3D" id="1.10.3060.10">
    <property type="entry name" value="Helical scaffold and wing domains of SecA"/>
    <property type="match status" value="1"/>
</dbReference>
<dbReference type="Gene3D" id="3.40.50.300">
    <property type="entry name" value="P-loop containing nucleotide triphosphate hydrolases"/>
    <property type="match status" value="2"/>
</dbReference>
<dbReference type="Gene3D" id="3.90.1440.10">
    <property type="entry name" value="SecA, preprotein cross-linking domain"/>
    <property type="match status" value="1"/>
</dbReference>
<dbReference type="HAMAP" id="MF_01382">
    <property type="entry name" value="SecA"/>
    <property type="match status" value="1"/>
</dbReference>
<dbReference type="InterPro" id="IPR014001">
    <property type="entry name" value="Helicase_ATP-bd"/>
</dbReference>
<dbReference type="InterPro" id="IPR001650">
    <property type="entry name" value="Helicase_C-like"/>
</dbReference>
<dbReference type="InterPro" id="IPR027417">
    <property type="entry name" value="P-loop_NTPase"/>
</dbReference>
<dbReference type="InterPro" id="IPR004027">
    <property type="entry name" value="SEC_C_motif"/>
</dbReference>
<dbReference type="InterPro" id="IPR000185">
    <property type="entry name" value="SecA"/>
</dbReference>
<dbReference type="InterPro" id="IPR020937">
    <property type="entry name" value="SecA_CS"/>
</dbReference>
<dbReference type="InterPro" id="IPR011115">
    <property type="entry name" value="SecA_DEAD"/>
</dbReference>
<dbReference type="InterPro" id="IPR014018">
    <property type="entry name" value="SecA_motor_DEAD"/>
</dbReference>
<dbReference type="InterPro" id="IPR011130">
    <property type="entry name" value="SecA_preprotein_X-link_dom"/>
</dbReference>
<dbReference type="InterPro" id="IPR044722">
    <property type="entry name" value="SecA_SF2_C"/>
</dbReference>
<dbReference type="InterPro" id="IPR011116">
    <property type="entry name" value="SecA_Wing/Scaffold"/>
</dbReference>
<dbReference type="InterPro" id="IPR036266">
    <property type="entry name" value="SecA_Wing/Scaffold_sf"/>
</dbReference>
<dbReference type="InterPro" id="IPR036670">
    <property type="entry name" value="SecA_X-link_sf"/>
</dbReference>
<dbReference type="NCBIfam" id="NF009538">
    <property type="entry name" value="PRK12904.1"/>
    <property type="match status" value="1"/>
</dbReference>
<dbReference type="NCBIfam" id="TIGR00963">
    <property type="entry name" value="secA"/>
    <property type="match status" value="1"/>
</dbReference>
<dbReference type="PANTHER" id="PTHR30612:SF0">
    <property type="entry name" value="CHLOROPLAST PROTEIN-TRANSPORTING ATPASE"/>
    <property type="match status" value="1"/>
</dbReference>
<dbReference type="PANTHER" id="PTHR30612">
    <property type="entry name" value="SECA INNER MEMBRANE COMPONENT OF SEC PROTEIN SECRETION SYSTEM"/>
    <property type="match status" value="1"/>
</dbReference>
<dbReference type="Pfam" id="PF21090">
    <property type="entry name" value="P-loop_SecA"/>
    <property type="match status" value="1"/>
</dbReference>
<dbReference type="Pfam" id="PF02810">
    <property type="entry name" value="SEC-C"/>
    <property type="match status" value="1"/>
</dbReference>
<dbReference type="Pfam" id="PF07517">
    <property type="entry name" value="SecA_DEAD"/>
    <property type="match status" value="1"/>
</dbReference>
<dbReference type="Pfam" id="PF01043">
    <property type="entry name" value="SecA_PP_bind"/>
    <property type="match status" value="1"/>
</dbReference>
<dbReference type="Pfam" id="PF07516">
    <property type="entry name" value="SecA_SW"/>
    <property type="match status" value="1"/>
</dbReference>
<dbReference type="PRINTS" id="PR00906">
    <property type="entry name" value="SECA"/>
</dbReference>
<dbReference type="SMART" id="SM00957">
    <property type="entry name" value="SecA_DEAD"/>
    <property type="match status" value="1"/>
</dbReference>
<dbReference type="SMART" id="SM00958">
    <property type="entry name" value="SecA_PP_bind"/>
    <property type="match status" value="1"/>
</dbReference>
<dbReference type="SUPFAM" id="SSF81886">
    <property type="entry name" value="Helical scaffold and wing domains of SecA"/>
    <property type="match status" value="1"/>
</dbReference>
<dbReference type="SUPFAM" id="SSF52540">
    <property type="entry name" value="P-loop containing nucleoside triphosphate hydrolases"/>
    <property type="match status" value="2"/>
</dbReference>
<dbReference type="SUPFAM" id="SSF81767">
    <property type="entry name" value="Pre-protein crosslinking domain of SecA"/>
    <property type="match status" value="1"/>
</dbReference>
<dbReference type="PROSITE" id="PS01312">
    <property type="entry name" value="SECA"/>
    <property type="match status" value="1"/>
</dbReference>
<dbReference type="PROSITE" id="PS51196">
    <property type="entry name" value="SECA_MOTOR_DEAD"/>
    <property type="match status" value="1"/>
</dbReference>